<protein>
    <recommendedName>
        <fullName>Uncharacterized protein PF0860</fullName>
    </recommendedName>
</protein>
<proteinExistence type="inferred from homology"/>
<reference key="1">
    <citation type="journal article" date="1999" name="Genetics">
        <title>Divergence of the hyperthermophilic archaea Pyrococcus furiosus and P. horikoshii inferred from complete genomic sequences.</title>
        <authorList>
            <person name="Maeder D.L."/>
            <person name="Weiss R.B."/>
            <person name="Dunn D.M."/>
            <person name="Cherry J.L."/>
            <person name="Gonzalez J.M."/>
            <person name="DiRuggiero J."/>
            <person name="Robb F.T."/>
        </authorList>
    </citation>
    <scope>NUCLEOTIDE SEQUENCE [LARGE SCALE GENOMIC DNA]</scope>
    <source>
        <strain>ATCC 43587 / DSM 3638 / JCM 8422 / Vc1</strain>
    </source>
</reference>
<comment type="similarity">
    <text evidence="1">Belongs to the BtpA family.</text>
</comment>
<gene>
    <name type="ordered locus">PF0860</name>
</gene>
<organism>
    <name type="scientific">Pyrococcus furiosus (strain ATCC 43587 / DSM 3638 / JCM 8422 / Vc1)</name>
    <dbReference type="NCBI Taxonomy" id="186497"/>
    <lineage>
        <taxon>Archaea</taxon>
        <taxon>Methanobacteriati</taxon>
        <taxon>Methanobacteriota</taxon>
        <taxon>Thermococci</taxon>
        <taxon>Thermococcales</taxon>
        <taxon>Thermococcaceae</taxon>
        <taxon>Pyrococcus</taxon>
    </lineage>
</organism>
<feature type="chain" id="PRO_0000159333" description="Uncharacterized protein PF0860">
    <location>
        <begin position="1"/>
        <end position="262"/>
    </location>
</feature>
<accession>Q8U2H5</accession>
<name>Y860_PYRFU</name>
<keyword id="KW-1185">Reference proteome</keyword>
<dbReference type="EMBL" id="AE009950">
    <property type="protein sequence ID" value="AAL80984.1"/>
    <property type="molecule type" value="Genomic_DNA"/>
</dbReference>
<dbReference type="STRING" id="186497.PF0860"/>
<dbReference type="PaxDb" id="186497-PF0860"/>
<dbReference type="DNASU" id="1468719"/>
<dbReference type="KEGG" id="pfu:PF0860"/>
<dbReference type="PATRIC" id="fig|186497.12.peg.910"/>
<dbReference type="eggNOG" id="arCOG01982">
    <property type="taxonomic scope" value="Archaea"/>
</dbReference>
<dbReference type="HOGENOM" id="CLU_075239_1_0_2"/>
<dbReference type="OrthoDB" id="38543at2157"/>
<dbReference type="PhylomeDB" id="Q8U2H5"/>
<dbReference type="Proteomes" id="UP000001013">
    <property type="component" value="Chromosome"/>
</dbReference>
<dbReference type="CDD" id="cd04722">
    <property type="entry name" value="TIM_phosphate_binding"/>
    <property type="match status" value="1"/>
</dbReference>
<dbReference type="Gene3D" id="3.20.20.70">
    <property type="entry name" value="Aldolase class I"/>
    <property type="match status" value="1"/>
</dbReference>
<dbReference type="InterPro" id="IPR013785">
    <property type="entry name" value="Aldolase_TIM"/>
</dbReference>
<dbReference type="InterPro" id="IPR005137">
    <property type="entry name" value="BtpA"/>
</dbReference>
<dbReference type="InterPro" id="IPR011060">
    <property type="entry name" value="RibuloseP-bd_barrel"/>
</dbReference>
<dbReference type="NCBIfam" id="TIGR00259">
    <property type="entry name" value="thylakoid_BtpA"/>
    <property type="match status" value="1"/>
</dbReference>
<dbReference type="PANTHER" id="PTHR21381:SF3">
    <property type="entry name" value="SGC REGION PROTEIN SGCQ-RELATED"/>
    <property type="match status" value="1"/>
</dbReference>
<dbReference type="PANTHER" id="PTHR21381">
    <property type="entry name" value="ZGC:162297"/>
    <property type="match status" value="1"/>
</dbReference>
<dbReference type="Pfam" id="PF03437">
    <property type="entry name" value="BtpA"/>
    <property type="match status" value="1"/>
</dbReference>
<dbReference type="PIRSF" id="PIRSF005956">
    <property type="entry name" value="BtpA"/>
    <property type="match status" value="1"/>
</dbReference>
<dbReference type="SUPFAM" id="SSF51366">
    <property type="entry name" value="Ribulose-phoshate binding barrel"/>
    <property type="match status" value="1"/>
</dbReference>
<evidence type="ECO:0000305" key="1"/>
<sequence>MKDLDFSKKPLIGVVHLKPLPGSPRYGGDFEEVIEWAIRDAKTYEEAGFDGIIVENFGDSPFSKTLPREVIPAFTVVAKAVKKEVSLPLGINALRNDCIVAYSIAHAVGGSFIRVNVLTGVAFTDQGIIEGCARELWNVKRIIGGDILTLADVHVKHAVHFTNFEDAVKDTVERGLADGIIVTGRRTGESISLEDLILAKRVSSIPVLVGSGVNPRNFRTLFKYADGFIVGTWVKENGKINNPVSLERAKILVRMKNSLMGV</sequence>